<feature type="chain" id="PRO_0000252779" description="Ketol-acid reductoisomerase (NADP(+))">
    <location>
        <begin position="1"/>
        <end position="338"/>
    </location>
</feature>
<feature type="domain" description="KARI N-terminal Rossmann" evidence="2">
    <location>
        <begin position="1"/>
        <end position="181"/>
    </location>
</feature>
<feature type="domain" description="KARI C-terminal knotted" evidence="3">
    <location>
        <begin position="182"/>
        <end position="327"/>
    </location>
</feature>
<feature type="active site" evidence="1">
    <location>
        <position position="107"/>
    </location>
</feature>
<feature type="binding site" evidence="1">
    <location>
        <begin position="24"/>
        <end position="27"/>
    </location>
    <ligand>
        <name>NADP(+)</name>
        <dbReference type="ChEBI" id="CHEBI:58349"/>
    </ligand>
</feature>
<feature type="binding site" evidence="1">
    <location>
        <position position="47"/>
    </location>
    <ligand>
        <name>NADP(+)</name>
        <dbReference type="ChEBI" id="CHEBI:58349"/>
    </ligand>
</feature>
<feature type="binding site" evidence="1">
    <location>
        <position position="52"/>
    </location>
    <ligand>
        <name>NADP(+)</name>
        <dbReference type="ChEBI" id="CHEBI:58349"/>
    </ligand>
</feature>
<feature type="binding site" evidence="1">
    <location>
        <position position="133"/>
    </location>
    <ligand>
        <name>NADP(+)</name>
        <dbReference type="ChEBI" id="CHEBI:58349"/>
    </ligand>
</feature>
<feature type="binding site" evidence="1">
    <location>
        <position position="190"/>
    </location>
    <ligand>
        <name>Mg(2+)</name>
        <dbReference type="ChEBI" id="CHEBI:18420"/>
        <label>1</label>
    </ligand>
</feature>
<feature type="binding site" evidence="1">
    <location>
        <position position="190"/>
    </location>
    <ligand>
        <name>Mg(2+)</name>
        <dbReference type="ChEBI" id="CHEBI:18420"/>
        <label>2</label>
    </ligand>
</feature>
<feature type="binding site" evidence="1">
    <location>
        <position position="194"/>
    </location>
    <ligand>
        <name>Mg(2+)</name>
        <dbReference type="ChEBI" id="CHEBI:18420"/>
        <label>1</label>
    </ligand>
</feature>
<feature type="binding site" evidence="1">
    <location>
        <position position="226"/>
    </location>
    <ligand>
        <name>Mg(2+)</name>
        <dbReference type="ChEBI" id="CHEBI:18420"/>
        <label>2</label>
    </ligand>
</feature>
<feature type="binding site" evidence="1">
    <location>
        <position position="230"/>
    </location>
    <ligand>
        <name>Mg(2+)</name>
        <dbReference type="ChEBI" id="CHEBI:18420"/>
        <label>2</label>
    </ligand>
</feature>
<feature type="binding site" evidence="1">
    <location>
        <position position="251"/>
    </location>
    <ligand>
        <name>substrate</name>
    </ligand>
</feature>
<reference key="1">
    <citation type="submission" date="2006-02" db="EMBL/GenBank/DDBJ databases">
        <title>Complete sequence of chromosome of Rhodoferax ferrireducens DSM 15236.</title>
        <authorList>
            <person name="Copeland A."/>
            <person name="Lucas S."/>
            <person name="Lapidus A."/>
            <person name="Barry K."/>
            <person name="Detter J.C."/>
            <person name="Glavina del Rio T."/>
            <person name="Hammon N."/>
            <person name="Israni S."/>
            <person name="Pitluck S."/>
            <person name="Brettin T."/>
            <person name="Bruce D."/>
            <person name="Han C."/>
            <person name="Tapia R."/>
            <person name="Gilna P."/>
            <person name="Kiss H."/>
            <person name="Schmutz J."/>
            <person name="Larimer F."/>
            <person name="Land M."/>
            <person name="Kyrpides N."/>
            <person name="Ivanova N."/>
            <person name="Richardson P."/>
        </authorList>
    </citation>
    <scope>NUCLEOTIDE SEQUENCE [LARGE SCALE GENOMIC DNA]</scope>
    <source>
        <strain>ATCC BAA-621 / DSM 15236 / T118</strain>
    </source>
</reference>
<sequence length="338" mass="36734">MKVFYDKDCDLSLIKGKTVAIIGYGSQGHAHAQNLNDSGVKVVVGLRKGGASWTKVEKAGLKVAEVADAVKAADVVMILLPDEHIAAVYTEDIEPNIKQGASLVFAHGFNVHYGLVTPRADLDVWMVAPKAPGHTVRGTYVQGGGVPQLIAIHQDKSGRTRDLALSYAMANGGGKAGIIETTFREETETDLFGEQAVLCGGTVELIKAGFETLVEAGYAPEMAYFECLHELKLIVDMIYEGGIANMNYSISNNAEYGEYVTGPKIITSASKDAMRQCLKDIQTGEYAKSFILENKAGAPTLLSRRRLTSEHQIEQVGEKLRAMMPWIKKNKLVDQTRN</sequence>
<evidence type="ECO:0000255" key="1">
    <source>
        <dbReference type="HAMAP-Rule" id="MF_00435"/>
    </source>
</evidence>
<evidence type="ECO:0000255" key="2">
    <source>
        <dbReference type="PROSITE-ProRule" id="PRU01197"/>
    </source>
</evidence>
<evidence type="ECO:0000255" key="3">
    <source>
        <dbReference type="PROSITE-ProRule" id="PRU01198"/>
    </source>
</evidence>
<comment type="function">
    <text evidence="1">Involved in the biosynthesis of branched-chain amino acids (BCAA). Catalyzes an alkyl-migration followed by a ketol-acid reduction of (S)-2-acetolactate (S2AL) to yield (R)-2,3-dihydroxy-isovalerate. In the isomerase reaction, S2AL is rearranged via a Mg-dependent methyl migration to produce 3-hydroxy-3-methyl-2-ketobutyrate (HMKB). In the reductase reaction, this 2-ketoacid undergoes a metal-dependent reduction by NADPH to yield (R)-2,3-dihydroxy-isovalerate.</text>
</comment>
<comment type="catalytic activity">
    <reaction evidence="1">
        <text>(2R)-2,3-dihydroxy-3-methylbutanoate + NADP(+) = (2S)-2-acetolactate + NADPH + H(+)</text>
        <dbReference type="Rhea" id="RHEA:22068"/>
        <dbReference type="ChEBI" id="CHEBI:15378"/>
        <dbReference type="ChEBI" id="CHEBI:49072"/>
        <dbReference type="ChEBI" id="CHEBI:57783"/>
        <dbReference type="ChEBI" id="CHEBI:58349"/>
        <dbReference type="ChEBI" id="CHEBI:58476"/>
        <dbReference type="EC" id="1.1.1.86"/>
    </reaction>
</comment>
<comment type="catalytic activity">
    <reaction evidence="1">
        <text>(2R,3R)-2,3-dihydroxy-3-methylpentanoate + NADP(+) = (S)-2-ethyl-2-hydroxy-3-oxobutanoate + NADPH + H(+)</text>
        <dbReference type="Rhea" id="RHEA:13493"/>
        <dbReference type="ChEBI" id="CHEBI:15378"/>
        <dbReference type="ChEBI" id="CHEBI:49256"/>
        <dbReference type="ChEBI" id="CHEBI:49258"/>
        <dbReference type="ChEBI" id="CHEBI:57783"/>
        <dbReference type="ChEBI" id="CHEBI:58349"/>
        <dbReference type="EC" id="1.1.1.86"/>
    </reaction>
</comment>
<comment type="cofactor">
    <cofactor evidence="1">
        <name>Mg(2+)</name>
        <dbReference type="ChEBI" id="CHEBI:18420"/>
    </cofactor>
    <text evidence="1">Binds 2 magnesium ions per subunit.</text>
</comment>
<comment type="pathway">
    <text evidence="1">Amino-acid biosynthesis; L-isoleucine biosynthesis; L-isoleucine from 2-oxobutanoate: step 2/4.</text>
</comment>
<comment type="pathway">
    <text evidence="1">Amino-acid biosynthesis; L-valine biosynthesis; L-valine from pyruvate: step 2/4.</text>
</comment>
<comment type="similarity">
    <text evidence="1">Belongs to the ketol-acid reductoisomerase family.</text>
</comment>
<organism>
    <name type="scientific">Albidiferax ferrireducens (strain ATCC BAA-621 / DSM 15236 / T118)</name>
    <name type="common">Rhodoferax ferrireducens</name>
    <dbReference type="NCBI Taxonomy" id="338969"/>
    <lineage>
        <taxon>Bacteria</taxon>
        <taxon>Pseudomonadati</taxon>
        <taxon>Pseudomonadota</taxon>
        <taxon>Betaproteobacteria</taxon>
        <taxon>Burkholderiales</taxon>
        <taxon>Comamonadaceae</taxon>
        <taxon>Rhodoferax</taxon>
    </lineage>
</organism>
<keyword id="KW-0028">Amino-acid biosynthesis</keyword>
<keyword id="KW-0100">Branched-chain amino acid biosynthesis</keyword>
<keyword id="KW-0460">Magnesium</keyword>
<keyword id="KW-0479">Metal-binding</keyword>
<keyword id="KW-0521">NADP</keyword>
<keyword id="KW-0560">Oxidoreductase</keyword>
<keyword id="KW-1185">Reference proteome</keyword>
<gene>
    <name evidence="1" type="primary">ilvC</name>
    <name type="ordered locus">Rfer_3324</name>
</gene>
<name>ILVC_ALBFT</name>
<accession>Q21T70</accession>
<protein>
    <recommendedName>
        <fullName evidence="1">Ketol-acid reductoisomerase (NADP(+))</fullName>
        <shortName evidence="1">KARI</shortName>
        <ecNumber evidence="1">1.1.1.86</ecNumber>
    </recommendedName>
    <alternativeName>
        <fullName evidence="1">Acetohydroxy-acid isomeroreductase</fullName>
        <shortName evidence="1">AHIR</shortName>
    </alternativeName>
    <alternativeName>
        <fullName evidence="1">Alpha-keto-beta-hydroxylacyl reductoisomerase</fullName>
    </alternativeName>
    <alternativeName>
        <fullName evidence="1">Ketol-acid reductoisomerase type 1</fullName>
    </alternativeName>
    <alternativeName>
        <fullName evidence="1">Ketol-acid reductoisomerase type I</fullName>
    </alternativeName>
</protein>
<dbReference type="EC" id="1.1.1.86" evidence="1"/>
<dbReference type="EMBL" id="CP000267">
    <property type="protein sequence ID" value="ABD71033.1"/>
    <property type="molecule type" value="Genomic_DNA"/>
</dbReference>
<dbReference type="RefSeq" id="WP_011465596.1">
    <property type="nucleotide sequence ID" value="NC_007908.1"/>
</dbReference>
<dbReference type="SMR" id="Q21T70"/>
<dbReference type="STRING" id="338969.Rfer_3324"/>
<dbReference type="KEGG" id="rfr:Rfer_3324"/>
<dbReference type="eggNOG" id="COG0059">
    <property type="taxonomic scope" value="Bacteria"/>
</dbReference>
<dbReference type="HOGENOM" id="CLU_033821_0_1_4"/>
<dbReference type="OrthoDB" id="9804088at2"/>
<dbReference type="UniPathway" id="UPA00047">
    <property type="reaction ID" value="UER00056"/>
</dbReference>
<dbReference type="UniPathway" id="UPA00049">
    <property type="reaction ID" value="UER00060"/>
</dbReference>
<dbReference type="Proteomes" id="UP000008332">
    <property type="component" value="Chromosome"/>
</dbReference>
<dbReference type="GO" id="GO:0005829">
    <property type="term" value="C:cytosol"/>
    <property type="evidence" value="ECO:0007669"/>
    <property type="project" value="TreeGrafter"/>
</dbReference>
<dbReference type="GO" id="GO:0004455">
    <property type="term" value="F:ketol-acid reductoisomerase activity"/>
    <property type="evidence" value="ECO:0007669"/>
    <property type="project" value="UniProtKB-UniRule"/>
</dbReference>
<dbReference type="GO" id="GO:0000287">
    <property type="term" value="F:magnesium ion binding"/>
    <property type="evidence" value="ECO:0007669"/>
    <property type="project" value="UniProtKB-UniRule"/>
</dbReference>
<dbReference type="GO" id="GO:0050661">
    <property type="term" value="F:NADP binding"/>
    <property type="evidence" value="ECO:0007669"/>
    <property type="project" value="InterPro"/>
</dbReference>
<dbReference type="GO" id="GO:0009097">
    <property type="term" value="P:isoleucine biosynthetic process"/>
    <property type="evidence" value="ECO:0007669"/>
    <property type="project" value="UniProtKB-UniRule"/>
</dbReference>
<dbReference type="GO" id="GO:0009099">
    <property type="term" value="P:L-valine biosynthetic process"/>
    <property type="evidence" value="ECO:0007669"/>
    <property type="project" value="UniProtKB-UniRule"/>
</dbReference>
<dbReference type="FunFam" id="3.40.50.720:FF:000023">
    <property type="entry name" value="Ketol-acid reductoisomerase (NADP(+))"/>
    <property type="match status" value="1"/>
</dbReference>
<dbReference type="Gene3D" id="6.10.240.10">
    <property type="match status" value="1"/>
</dbReference>
<dbReference type="Gene3D" id="3.40.50.720">
    <property type="entry name" value="NAD(P)-binding Rossmann-like Domain"/>
    <property type="match status" value="1"/>
</dbReference>
<dbReference type="HAMAP" id="MF_00435">
    <property type="entry name" value="IlvC"/>
    <property type="match status" value="1"/>
</dbReference>
<dbReference type="InterPro" id="IPR008927">
    <property type="entry name" value="6-PGluconate_DH-like_C_sf"/>
</dbReference>
<dbReference type="InterPro" id="IPR013023">
    <property type="entry name" value="KARI"/>
</dbReference>
<dbReference type="InterPro" id="IPR000506">
    <property type="entry name" value="KARI_C"/>
</dbReference>
<dbReference type="InterPro" id="IPR013116">
    <property type="entry name" value="KARI_N"/>
</dbReference>
<dbReference type="InterPro" id="IPR014359">
    <property type="entry name" value="KARI_prok"/>
</dbReference>
<dbReference type="InterPro" id="IPR036291">
    <property type="entry name" value="NAD(P)-bd_dom_sf"/>
</dbReference>
<dbReference type="NCBIfam" id="TIGR00465">
    <property type="entry name" value="ilvC"/>
    <property type="match status" value="1"/>
</dbReference>
<dbReference type="NCBIfam" id="NF004017">
    <property type="entry name" value="PRK05479.1"/>
    <property type="match status" value="1"/>
</dbReference>
<dbReference type="NCBIfam" id="NF009940">
    <property type="entry name" value="PRK13403.1"/>
    <property type="match status" value="1"/>
</dbReference>
<dbReference type="PANTHER" id="PTHR21371">
    <property type="entry name" value="KETOL-ACID REDUCTOISOMERASE, MITOCHONDRIAL"/>
    <property type="match status" value="1"/>
</dbReference>
<dbReference type="PANTHER" id="PTHR21371:SF1">
    <property type="entry name" value="KETOL-ACID REDUCTOISOMERASE, MITOCHONDRIAL"/>
    <property type="match status" value="1"/>
</dbReference>
<dbReference type="Pfam" id="PF01450">
    <property type="entry name" value="KARI_C"/>
    <property type="match status" value="1"/>
</dbReference>
<dbReference type="Pfam" id="PF07991">
    <property type="entry name" value="KARI_N"/>
    <property type="match status" value="1"/>
</dbReference>
<dbReference type="PIRSF" id="PIRSF000116">
    <property type="entry name" value="IlvC_gammaproteo"/>
    <property type="match status" value="1"/>
</dbReference>
<dbReference type="SUPFAM" id="SSF48179">
    <property type="entry name" value="6-phosphogluconate dehydrogenase C-terminal domain-like"/>
    <property type="match status" value="1"/>
</dbReference>
<dbReference type="SUPFAM" id="SSF51735">
    <property type="entry name" value="NAD(P)-binding Rossmann-fold domains"/>
    <property type="match status" value="1"/>
</dbReference>
<dbReference type="PROSITE" id="PS51851">
    <property type="entry name" value="KARI_C"/>
    <property type="match status" value="1"/>
</dbReference>
<dbReference type="PROSITE" id="PS51850">
    <property type="entry name" value="KARI_N"/>
    <property type="match status" value="1"/>
</dbReference>
<proteinExistence type="inferred from homology"/>